<sequence length="624" mass="71530">MSDGDILRSTFPSYMAEGERLYLCGEFTKAIQSFTNALHLQSGDKNCLVARSKCYLKMGDLEKSLNDAEASLRNDPTFCKGILQKAETLYTMGDFEFALVFYHRGYKLRPDREFKVGIQKAQEAINNSVGSPSSIKLENKGDLSFLSKQAESKKAQQKHLPIKQLSYSTKHEIKRKGSLKSEKTVRQLLGELYVDKEYLEKLLLDEDLIKGTIKSGLTVEDLIMTGINYLDTRSNFWRQQKPIYARERDRKLMQEKWLRDRKRSPSQTAHYILKSLEDIDMLLTSGSADGSLQKAEKVLKKVLEWNQEEVPNKDELVGNLYSCIGNAQIELGQMVAALQSHRKDLEIAKEHDLPDAKSRALDNIGRVFARVGKFQQAIDTWEEKIPLAKTTLEKTWLFHEIGRCYLELDQAWQAQSYGEKSQQYAEEEGDLEWQLNASVLVAQAQVKLRDFESAVNNFEKALERAKLVHNNEAQQAIISALDDANKGIIEELKKTNYREILREKAERQDIMSQMDLQGASEKEPLRGREEQERVVKQWERDQESEREATDDEQDRKSSGGLSKKLLGDGHSSNLGIRRESREIYRRLSDYSSHLPSEDGSQKQEKKQAEAAKGEVQKLEKTKEE</sequence>
<accession>Q9D4B2</accession>
<accession>A2BI62</accession>
<accession>Q80X58</accession>
<keyword id="KW-0966">Cell projection</keyword>
<keyword id="KW-0963">Cytoplasm</keyword>
<keyword id="KW-0206">Cytoskeleton</keyword>
<keyword id="KW-1185">Reference proteome</keyword>
<keyword id="KW-0677">Repeat</keyword>
<keyword id="KW-0802">TPR repeat</keyword>
<name>ODAD4_MOUSE</name>
<evidence type="ECO:0000250" key="1">
    <source>
        <dbReference type="UniProtKB" id="Q96NG3"/>
    </source>
</evidence>
<evidence type="ECO:0000255" key="2"/>
<evidence type="ECO:0000256" key="3">
    <source>
        <dbReference type="SAM" id="MobiDB-lite"/>
    </source>
</evidence>
<evidence type="ECO:0000269" key="4">
    <source>
    </source>
</evidence>
<evidence type="ECO:0000269" key="5">
    <source>
    </source>
</evidence>
<evidence type="ECO:0000269" key="6">
    <source>
    </source>
</evidence>
<evidence type="ECO:0000305" key="7"/>
<dbReference type="EMBL" id="AK016657">
    <property type="protein sequence ID" value="BAB30363.1"/>
    <property type="molecule type" value="mRNA"/>
</dbReference>
<dbReference type="EMBL" id="BX842667">
    <property type="status" value="NOT_ANNOTATED_CDS"/>
    <property type="molecule type" value="Genomic_DNA"/>
</dbReference>
<dbReference type="EMBL" id="BC050805">
    <property type="protein sequence ID" value="AAH50805.2"/>
    <property type="status" value="ALT_FRAME"/>
    <property type="molecule type" value="mRNA"/>
</dbReference>
<dbReference type="CCDS" id="CCDS36331.1"/>
<dbReference type="RefSeq" id="NP_083194.2">
    <property type="nucleotide sequence ID" value="NM_028918.3"/>
</dbReference>
<dbReference type="SMR" id="Q9D4B2"/>
<dbReference type="BioGRID" id="216725">
    <property type="interactions" value="2"/>
</dbReference>
<dbReference type="FunCoup" id="Q9D4B2">
    <property type="interactions" value="186"/>
</dbReference>
<dbReference type="STRING" id="10090.ENSMUSP00000090355"/>
<dbReference type="iPTMnet" id="Q9D4B2"/>
<dbReference type="PhosphoSitePlus" id="Q9D4B2"/>
<dbReference type="SwissPalm" id="Q9D4B2"/>
<dbReference type="PaxDb" id="10090-ENSMUSP00000090355"/>
<dbReference type="ProteomicsDB" id="300149"/>
<dbReference type="Antibodypedia" id="8054">
    <property type="antibodies" value="17 antibodies from 10 providers"/>
</dbReference>
<dbReference type="Ensembl" id="ENSMUST00000092684.12">
    <property type="protein sequence ID" value="ENSMUSP00000090355.6"/>
    <property type="gene ID" value="ENSMUSG00000006784.15"/>
</dbReference>
<dbReference type="GeneID" id="74407"/>
<dbReference type="KEGG" id="mmu:74407"/>
<dbReference type="UCSC" id="uc007lln.1">
    <property type="organism name" value="mouse"/>
</dbReference>
<dbReference type="AGR" id="MGI:1921657"/>
<dbReference type="CTD" id="83538"/>
<dbReference type="MGI" id="MGI:1921657">
    <property type="gene designation" value="Odad4"/>
</dbReference>
<dbReference type="VEuPathDB" id="HostDB:ENSMUSG00000006784"/>
<dbReference type="eggNOG" id="KOG1124">
    <property type="taxonomic scope" value="Eukaryota"/>
</dbReference>
<dbReference type="GeneTree" id="ENSGT00390000007911"/>
<dbReference type="InParanoid" id="Q9D4B2"/>
<dbReference type="OMA" id="VMPGCKP"/>
<dbReference type="OrthoDB" id="10268002at2759"/>
<dbReference type="PhylomeDB" id="Q9D4B2"/>
<dbReference type="TreeFam" id="TF323661"/>
<dbReference type="BioGRID-ORCS" id="74407">
    <property type="hits" value="5 hits in 75 CRISPR screens"/>
</dbReference>
<dbReference type="PRO" id="PR:Q9D4B2"/>
<dbReference type="Proteomes" id="UP000000589">
    <property type="component" value="Chromosome 11"/>
</dbReference>
<dbReference type="RNAct" id="Q9D4B2">
    <property type="molecule type" value="protein"/>
</dbReference>
<dbReference type="Bgee" id="ENSMUSG00000006784">
    <property type="expression patterns" value="Expressed in seminiferous tubule of testis and 101 other cell types or tissues"/>
</dbReference>
<dbReference type="ExpressionAtlas" id="Q9D4B2">
    <property type="expression patterns" value="baseline and differential"/>
</dbReference>
<dbReference type="GO" id="GO:0097728">
    <property type="term" value="C:9+0 motile cilium"/>
    <property type="evidence" value="ECO:0000314"/>
    <property type="project" value="MGI"/>
</dbReference>
<dbReference type="GO" id="GO:0097729">
    <property type="term" value="C:9+2 motile cilium"/>
    <property type="evidence" value="ECO:0000314"/>
    <property type="project" value="MGI"/>
</dbReference>
<dbReference type="GO" id="GO:0005930">
    <property type="term" value="C:axoneme"/>
    <property type="evidence" value="ECO:0000314"/>
    <property type="project" value="MGI"/>
</dbReference>
<dbReference type="GO" id="GO:0005576">
    <property type="term" value="C:extracellular region"/>
    <property type="evidence" value="ECO:0007669"/>
    <property type="project" value="GOC"/>
</dbReference>
<dbReference type="GO" id="GO:0120228">
    <property type="term" value="C:outer dynein arm docking complex"/>
    <property type="evidence" value="ECO:0007669"/>
    <property type="project" value="Ensembl"/>
</dbReference>
<dbReference type="GO" id="GO:0007420">
    <property type="term" value="P:brain development"/>
    <property type="evidence" value="ECO:0000315"/>
    <property type="project" value="MGI"/>
</dbReference>
<dbReference type="GO" id="GO:0090660">
    <property type="term" value="P:cerebrospinal fluid circulation"/>
    <property type="evidence" value="ECO:0000315"/>
    <property type="project" value="MGI"/>
</dbReference>
<dbReference type="GO" id="GO:0003341">
    <property type="term" value="P:cilium movement"/>
    <property type="evidence" value="ECO:0000250"/>
    <property type="project" value="UniProtKB"/>
</dbReference>
<dbReference type="GO" id="GO:0060287">
    <property type="term" value="P:epithelial cilium movement involved in determination of left/right asymmetry"/>
    <property type="evidence" value="ECO:0000315"/>
    <property type="project" value="MGI"/>
</dbReference>
<dbReference type="GO" id="GO:0007507">
    <property type="term" value="P:heart development"/>
    <property type="evidence" value="ECO:0000315"/>
    <property type="project" value="MGI"/>
</dbReference>
<dbReference type="GO" id="GO:0030324">
    <property type="term" value="P:lung development"/>
    <property type="evidence" value="ECO:0000315"/>
    <property type="project" value="MGI"/>
</dbReference>
<dbReference type="GO" id="GO:0120197">
    <property type="term" value="P:mucociliary clearance"/>
    <property type="evidence" value="ECO:0007669"/>
    <property type="project" value="Ensembl"/>
</dbReference>
<dbReference type="GO" id="GO:0036158">
    <property type="term" value="P:outer dynein arm assembly"/>
    <property type="evidence" value="ECO:0000315"/>
    <property type="project" value="MGI"/>
</dbReference>
<dbReference type="GO" id="GO:0120229">
    <property type="term" value="P:protein localization to motile cilium"/>
    <property type="evidence" value="ECO:0007669"/>
    <property type="project" value="Ensembl"/>
</dbReference>
<dbReference type="FunFam" id="1.25.40.10:FF:000189">
    <property type="entry name" value="Tetratricopeptide repeat domain 25"/>
    <property type="match status" value="1"/>
</dbReference>
<dbReference type="FunFam" id="1.25.40.10:FF:000274">
    <property type="entry name" value="Tetratricopeptide repeat domain 25"/>
    <property type="match status" value="1"/>
</dbReference>
<dbReference type="Gene3D" id="1.25.40.10">
    <property type="entry name" value="Tetratricopeptide repeat domain"/>
    <property type="match status" value="2"/>
</dbReference>
<dbReference type="InterPro" id="IPR040111">
    <property type="entry name" value="ODAD4"/>
</dbReference>
<dbReference type="InterPro" id="IPR011990">
    <property type="entry name" value="TPR-like_helical_dom_sf"/>
</dbReference>
<dbReference type="InterPro" id="IPR019734">
    <property type="entry name" value="TPR_rpt"/>
</dbReference>
<dbReference type="PANTHER" id="PTHR23040">
    <property type="match status" value="1"/>
</dbReference>
<dbReference type="PANTHER" id="PTHR23040:SF1">
    <property type="entry name" value="OUTER DYNEIN ARM-DOCKING COMPLEX SUBUNIT 4"/>
    <property type="match status" value="1"/>
</dbReference>
<dbReference type="Pfam" id="PF13181">
    <property type="entry name" value="TPR_8"/>
    <property type="match status" value="1"/>
</dbReference>
<dbReference type="SMART" id="SM00028">
    <property type="entry name" value="TPR"/>
    <property type="match status" value="7"/>
</dbReference>
<dbReference type="SUPFAM" id="SSF48452">
    <property type="entry name" value="TPR-like"/>
    <property type="match status" value="1"/>
</dbReference>
<dbReference type="PROSITE" id="PS50005">
    <property type="entry name" value="TPR"/>
    <property type="match status" value="6"/>
</dbReference>
<dbReference type="PROSITE" id="PS50293">
    <property type="entry name" value="TPR_REGION"/>
    <property type="match status" value="2"/>
</dbReference>
<comment type="function">
    <text evidence="5">Component of the outer dynein arm-docking complex (ODA-DC) that mediates outer dynein arms (ODA) binding onto the doublet microtubule. Plays an essential role for the assembly of ODA-DC and for the docking of ODA in ciliary axoneme.</text>
</comment>
<comment type="subunit">
    <text evidence="1 4 6">Component of the outer dynein arm-docking complex along with ODAD1, ODAD2, and ODAD3 (By similarity). Interacts with ODAD1; this interaction may facilitate the recruitment and/or attachment of outer dynein arm docking complex proteins, including ODAD1, ODAD3 and ODAD2, to ciliary axonemes (By similarity). Interacts with components of the IFT complex A, including IFT140, TTC21B/IFT139 and WDR19/IFT144, and the IFT complex B, including IFT46, IFT52 and IFT57 (PubMed:25860617). Interacts with CFAP53 (PubMed:33347437).</text>
</comment>
<comment type="subcellular location">
    <subcellularLocation>
        <location evidence="4">Cell projection</location>
        <location evidence="4">Cilium</location>
    </subcellularLocation>
    <subcellularLocation>
        <location evidence="1">Cytoplasm</location>
        <location evidence="1">Cytoskeleton</location>
        <location evidence="1">Cilium axoneme</location>
    </subcellularLocation>
</comment>
<comment type="developmental stage">
    <text evidence="4 5">At 7.5 dpc, strong expression restricted to the ventral node, the left-right organizer (PubMed:27486780). Up-regulated in tracheal epithelial cells during in vitro differentiation into multiciliated cells (PubMed:25860617).</text>
</comment>
<comment type="disruption phenotype">
    <text evidence="5">Heterozygous intercrosses reveal deviation from the Mendelian distribution, with only 6 homozygous out of 53 born mice, suggesting increased death in utero. Most surviving homozygous mice present with small body size, some with hydrocephalus at the age of 2 weeks. They display a variety of left-right body asymmetry defects, including reversal of lung lobation or dextrocardia. At the cell level, the trachea and fallopian tubes of mutant animals show absence of outer dynein arms from the ciliary axonemes, and consequently severe reduction of cilia beating. There is no evidence of short cilia or a reduction in cilia number.</text>
</comment>
<comment type="sequence caution" evidence="7">
    <conflict type="frameshift">
        <sequence resource="EMBL-CDS" id="AAH50805"/>
    </conflict>
</comment>
<proteinExistence type="evidence at protein level"/>
<reference key="1">
    <citation type="journal article" date="2005" name="Science">
        <title>The transcriptional landscape of the mammalian genome.</title>
        <authorList>
            <person name="Carninci P."/>
            <person name="Kasukawa T."/>
            <person name="Katayama S."/>
            <person name="Gough J."/>
            <person name="Frith M.C."/>
            <person name="Maeda N."/>
            <person name="Oyama R."/>
            <person name="Ravasi T."/>
            <person name="Lenhard B."/>
            <person name="Wells C."/>
            <person name="Kodzius R."/>
            <person name="Shimokawa K."/>
            <person name="Bajic V.B."/>
            <person name="Brenner S.E."/>
            <person name="Batalov S."/>
            <person name="Forrest A.R."/>
            <person name="Zavolan M."/>
            <person name="Davis M.J."/>
            <person name="Wilming L.G."/>
            <person name="Aidinis V."/>
            <person name="Allen J.E."/>
            <person name="Ambesi-Impiombato A."/>
            <person name="Apweiler R."/>
            <person name="Aturaliya R.N."/>
            <person name="Bailey T.L."/>
            <person name="Bansal M."/>
            <person name="Baxter L."/>
            <person name="Beisel K.W."/>
            <person name="Bersano T."/>
            <person name="Bono H."/>
            <person name="Chalk A.M."/>
            <person name="Chiu K.P."/>
            <person name="Choudhary V."/>
            <person name="Christoffels A."/>
            <person name="Clutterbuck D.R."/>
            <person name="Crowe M.L."/>
            <person name="Dalla E."/>
            <person name="Dalrymple B.P."/>
            <person name="de Bono B."/>
            <person name="Della Gatta G."/>
            <person name="di Bernardo D."/>
            <person name="Down T."/>
            <person name="Engstrom P."/>
            <person name="Fagiolini M."/>
            <person name="Faulkner G."/>
            <person name="Fletcher C.F."/>
            <person name="Fukushima T."/>
            <person name="Furuno M."/>
            <person name="Futaki S."/>
            <person name="Gariboldi M."/>
            <person name="Georgii-Hemming P."/>
            <person name="Gingeras T.R."/>
            <person name="Gojobori T."/>
            <person name="Green R.E."/>
            <person name="Gustincich S."/>
            <person name="Harbers M."/>
            <person name="Hayashi Y."/>
            <person name="Hensch T.K."/>
            <person name="Hirokawa N."/>
            <person name="Hill D."/>
            <person name="Huminiecki L."/>
            <person name="Iacono M."/>
            <person name="Ikeo K."/>
            <person name="Iwama A."/>
            <person name="Ishikawa T."/>
            <person name="Jakt M."/>
            <person name="Kanapin A."/>
            <person name="Katoh M."/>
            <person name="Kawasawa Y."/>
            <person name="Kelso J."/>
            <person name="Kitamura H."/>
            <person name="Kitano H."/>
            <person name="Kollias G."/>
            <person name="Krishnan S.P."/>
            <person name="Kruger A."/>
            <person name="Kummerfeld S.K."/>
            <person name="Kurochkin I.V."/>
            <person name="Lareau L.F."/>
            <person name="Lazarevic D."/>
            <person name="Lipovich L."/>
            <person name="Liu J."/>
            <person name="Liuni S."/>
            <person name="McWilliam S."/>
            <person name="Madan Babu M."/>
            <person name="Madera M."/>
            <person name="Marchionni L."/>
            <person name="Matsuda H."/>
            <person name="Matsuzawa S."/>
            <person name="Miki H."/>
            <person name="Mignone F."/>
            <person name="Miyake S."/>
            <person name="Morris K."/>
            <person name="Mottagui-Tabar S."/>
            <person name="Mulder N."/>
            <person name="Nakano N."/>
            <person name="Nakauchi H."/>
            <person name="Ng P."/>
            <person name="Nilsson R."/>
            <person name="Nishiguchi S."/>
            <person name="Nishikawa S."/>
            <person name="Nori F."/>
            <person name="Ohara O."/>
            <person name="Okazaki Y."/>
            <person name="Orlando V."/>
            <person name="Pang K.C."/>
            <person name="Pavan W.J."/>
            <person name="Pavesi G."/>
            <person name="Pesole G."/>
            <person name="Petrovsky N."/>
            <person name="Piazza S."/>
            <person name="Reed J."/>
            <person name="Reid J.F."/>
            <person name="Ring B.Z."/>
            <person name="Ringwald M."/>
            <person name="Rost B."/>
            <person name="Ruan Y."/>
            <person name="Salzberg S.L."/>
            <person name="Sandelin A."/>
            <person name="Schneider C."/>
            <person name="Schoenbach C."/>
            <person name="Sekiguchi K."/>
            <person name="Semple C.A."/>
            <person name="Seno S."/>
            <person name="Sessa L."/>
            <person name="Sheng Y."/>
            <person name="Shibata Y."/>
            <person name="Shimada H."/>
            <person name="Shimada K."/>
            <person name="Silva D."/>
            <person name="Sinclair B."/>
            <person name="Sperling S."/>
            <person name="Stupka E."/>
            <person name="Sugiura K."/>
            <person name="Sultana R."/>
            <person name="Takenaka Y."/>
            <person name="Taki K."/>
            <person name="Tammoja K."/>
            <person name="Tan S.L."/>
            <person name="Tang S."/>
            <person name="Taylor M.S."/>
            <person name="Tegner J."/>
            <person name="Teichmann S.A."/>
            <person name="Ueda H.R."/>
            <person name="van Nimwegen E."/>
            <person name="Verardo R."/>
            <person name="Wei C.L."/>
            <person name="Yagi K."/>
            <person name="Yamanishi H."/>
            <person name="Zabarovsky E."/>
            <person name="Zhu S."/>
            <person name="Zimmer A."/>
            <person name="Hide W."/>
            <person name="Bult C."/>
            <person name="Grimmond S.M."/>
            <person name="Teasdale R.D."/>
            <person name="Liu E.T."/>
            <person name="Brusic V."/>
            <person name="Quackenbush J."/>
            <person name="Wahlestedt C."/>
            <person name="Mattick J.S."/>
            <person name="Hume D.A."/>
            <person name="Kai C."/>
            <person name="Sasaki D."/>
            <person name="Tomaru Y."/>
            <person name="Fukuda S."/>
            <person name="Kanamori-Katayama M."/>
            <person name="Suzuki M."/>
            <person name="Aoki J."/>
            <person name="Arakawa T."/>
            <person name="Iida J."/>
            <person name="Imamura K."/>
            <person name="Itoh M."/>
            <person name="Kato T."/>
            <person name="Kawaji H."/>
            <person name="Kawagashira N."/>
            <person name="Kawashima T."/>
            <person name="Kojima M."/>
            <person name="Kondo S."/>
            <person name="Konno H."/>
            <person name="Nakano K."/>
            <person name="Ninomiya N."/>
            <person name="Nishio T."/>
            <person name="Okada M."/>
            <person name="Plessy C."/>
            <person name="Shibata K."/>
            <person name="Shiraki T."/>
            <person name="Suzuki S."/>
            <person name="Tagami M."/>
            <person name="Waki K."/>
            <person name="Watahiki A."/>
            <person name="Okamura-Oho Y."/>
            <person name="Suzuki H."/>
            <person name="Kawai J."/>
            <person name="Hayashizaki Y."/>
        </authorList>
    </citation>
    <scope>NUCLEOTIDE SEQUENCE [LARGE SCALE MRNA]</scope>
    <source>
        <strain>C57BL/6J</strain>
        <tissue>Testis</tissue>
    </source>
</reference>
<reference key="2">
    <citation type="journal article" date="2009" name="PLoS Biol.">
        <title>Lineage-specific biology revealed by a finished genome assembly of the mouse.</title>
        <authorList>
            <person name="Church D.M."/>
            <person name="Goodstadt L."/>
            <person name="Hillier L.W."/>
            <person name="Zody M.C."/>
            <person name="Goldstein S."/>
            <person name="She X."/>
            <person name="Bult C.J."/>
            <person name="Agarwala R."/>
            <person name="Cherry J.L."/>
            <person name="DiCuccio M."/>
            <person name="Hlavina W."/>
            <person name="Kapustin Y."/>
            <person name="Meric P."/>
            <person name="Maglott D."/>
            <person name="Birtle Z."/>
            <person name="Marques A.C."/>
            <person name="Graves T."/>
            <person name="Zhou S."/>
            <person name="Teague B."/>
            <person name="Potamousis K."/>
            <person name="Churas C."/>
            <person name="Place M."/>
            <person name="Herschleb J."/>
            <person name="Runnheim R."/>
            <person name="Forrest D."/>
            <person name="Amos-Landgraf J."/>
            <person name="Schwartz D.C."/>
            <person name="Cheng Z."/>
            <person name="Lindblad-Toh K."/>
            <person name="Eichler E.E."/>
            <person name="Ponting C.P."/>
        </authorList>
    </citation>
    <scope>NUCLEOTIDE SEQUENCE [LARGE SCALE GENOMIC DNA]</scope>
    <source>
        <strain>C57BL/6J</strain>
    </source>
</reference>
<reference key="3">
    <citation type="journal article" date="2004" name="Genome Res.">
        <title>The status, quality, and expansion of the NIH full-length cDNA project: the Mammalian Gene Collection (MGC).</title>
        <authorList>
            <consortium name="The MGC Project Team"/>
        </authorList>
    </citation>
    <scope>NUCLEOTIDE SEQUENCE [LARGE SCALE MRNA]</scope>
    <source>
        <tissue>Testis</tissue>
    </source>
</reference>
<reference key="4">
    <citation type="journal article" date="2010" name="Cell">
        <title>A tissue-specific atlas of mouse protein phosphorylation and expression.</title>
        <authorList>
            <person name="Huttlin E.L."/>
            <person name="Jedrychowski M.P."/>
            <person name="Elias J.E."/>
            <person name="Goswami T."/>
            <person name="Rad R."/>
            <person name="Beausoleil S.A."/>
            <person name="Villen J."/>
            <person name="Haas W."/>
            <person name="Sowa M.E."/>
            <person name="Gygi S.P."/>
        </authorList>
    </citation>
    <scope>IDENTIFICATION BY MASS SPECTROMETRY [LARGE SCALE ANALYSIS]</scope>
    <source>
        <tissue>Testis</tissue>
    </source>
</reference>
<reference key="5">
    <citation type="journal article" date="2015" name="PLoS ONE">
        <title>Characterization of tetratricopeptide repeat-containing proteins critical for cilia formation and function.</title>
        <authorList>
            <person name="Xu Y."/>
            <person name="Cao J."/>
            <person name="Huang S."/>
            <person name="Feng D."/>
            <person name="Zhang W."/>
            <person name="Zhu X."/>
            <person name="Yan X."/>
        </authorList>
    </citation>
    <scope>INTERACTION WITH COMPONENTS OF THE IFT A AND B COMPLEXES</scope>
    <scope>SUBCELLULAR LOCATION</scope>
    <scope>DEVELOPMENTAL STAGE</scope>
</reference>
<reference key="6">
    <citation type="journal article" date="2016" name="Am. J. Hum. Genet.">
        <title>TTC25 deficiency results in defects of the outer dynein arm docking machinery and primary ciliary dyskinesia with left-right body asymmetry randomization.</title>
        <authorList>
            <person name="Wallmeier J."/>
            <person name="Shiratori H."/>
            <person name="Dougherty G.W."/>
            <person name="Edelbusch C."/>
            <person name="Hjeij R."/>
            <person name="Loges N.T."/>
            <person name="Menchen T."/>
            <person name="Olbrich H."/>
            <person name="Pennekamp P."/>
            <person name="Raidt J."/>
            <person name="Werner C."/>
            <person name="Minegishi K."/>
            <person name="Shinohara K."/>
            <person name="Asai Y."/>
            <person name="Takaoka K."/>
            <person name="Lee C."/>
            <person name="Griese M."/>
            <person name="Memari Y."/>
            <person name="Durbin R."/>
            <person name="Kolb-Kokocinski A."/>
            <person name="Sauer S."/>
            <person name="Wallingford J.B."/>
            <person name="Hamada H."/>
            <person name="Omran H."/>
        </authorList>
    </citation>
    <scope>FUNCTION</scope>
    <scope>DEVELOPMENTAL STAGE</scope>
    <scope>DISRUPTION PHENOTYPE</scope>
</reference>
<reference key="7">
    <citation type="journal article" date="2020" name="PLoS Genet.">
        <title>CFAP53 regulates mammalian cilia-type motility patterns through differential localization and recruitment of axonemal dynein components.</title>
        <authorList>
            <person name="Ide T."/>
            <person name="Twan W.K."/>
            <person name="Lu H."/>
            <person name="Ikawa Y."/>
            <person name="Lim L.X."/>
            <person name="Henninger N."/>
            <person name="Nishimura H."/>
            <person name="Takaoka K."/>
            <person name="Narasimhan V."/>
            <person name="Yan X."/>
            <person name="Shiratori H."/>
            <person name="Roy S."/>
            <person name="Hamada H."/>
        </authorList>
    </citation>
    <scope>INTERACTION WITH CFAP53</scope>
</reference>
<organism>
    <name type="scientific">Mus musculus</name>
    <name type="common">Mouse</name>
    <dbReference type="NCBI Taxonomy" id="10090"/>
    <lineage>
        <taxon>Eukaryota</taxon>
        <taxon>Metazoa</taxon>
        <taxon>Chordata</taxon>
        <taxon>Craniata</taxon>
        <taxon>Vertebrata</taxon>
        <taxon>Euteleostomi</taxon>
        <taxon>Mammalia</taxon>
        <taxon>Eutheria</taxon>
        <taxon>Euarchontoglires</taxon>
        <taxon>Glires</taxon>
        <taxon>Rodentia</taxon>
        <taxon>Myomorpha</taxon>
        <taxon>Muroidea</taxon>
        <taxon>Muridae</taxon>
        <taxon>Murinae</taxon>
        <taxon>Mus</taxon>
        <taxon>Mus</taxon>
    </lineage>
</organism>
<gene>
    <name type="primary">Odad4</name>
    <name type="synonym">Ttc25</name>
</gene>
<feature type="chain" id="PRO_0000284508" description="Outer dynein arm-docking complex subunit 4">
    <location>
        <begin position="1"/>
        <end position="624"/>
    </location>
</feature>
<feature type="repeat" description="TPR 1" evidence="2">
    <location>
        <begin position="11"/>
        <end position="44"/>
    </location>
</feature>
<feature type="repeat" description="TPR 2" evidence="2">
    <location>
        <begin position="46"/>
        <end position="78"/>
    </location>
</feature>
<feature type="repeat" description="TPR 3" evidence="2">
    <location>
        <begin position="79"/>
        <end position="112"/>
    </location>
</feature>
<feature type="repeat" description="TPR 4" evidence="2">
    <location>
        <begin position="273"/>
        <end position="309"/>
    </location>
</feature>
<feature type="repeat" description="TPR 5" evidence="2">
    <location>
        <begin position="318"/>
        <end position="351"/>
    </location>
</feature>
<feature type="repeat" description="TPR 6" evidence="2">
    <location>
        <begin position="358"/>
        <end position="391"/>
    </location>
</feature>
<feature type="repeat" description="TPR 7" evidence="2">
    <location>
        <begin position="395"/>
        <end position="428"/>
    </location>
</feature>
<feature type="repeat" description="TPR 8" evidence="2">
    <location>
        <begin position="435"/>
        <end position="468"/>
    </location>
</feature>
<feature type="region of interest" description="Disordered" evidence="3">
    <location>
        <begin position="511"/>
        <end position="624"/>
    </location>
</feature>
<feature type="compositionally biased region" description="Basic and acidic residues" evidence="3">
    <location>
        <begin position="520"/>
        <end position="557"/>
    </location>
</feature>
<feature type="compositionally biased region" description="Basic and acidic residues" evidence="3">
    <location>
        <begin position="576"/>
        <end position="588"/>
    </location>
</feature>
<feature type="compositionally biased region" description="Basic and acidic residues" evidence="3">
    <location>
        <begin position="595"/>
        <end position="624"/>
    </location>
</feature>
<feature type="sequence conflict" description="In Ref. 1; BAB30363." evidence="7" ref="1">
    <original>E</original>
    <variation>K</variation>
    <location>
        <position position="123"/>
    </location>
</feature>
<feature type="sequence conflict" description="In Ref. 1; BAB30363." evidence="7" ref="1">
    <original>E</original>
    <variation>D</variation>
    <location>
        <position position="277"/>
    </location>
</feature>
<feature type="sequence conflict" description="In Ref. 1; BAB30363." evidence="7" ref="1">
    <original>E</original>
    <variation>K</variation>
    <location>
        <position position="330"/>
    </location>
</feature>
<feature type="sequence conflict" description="In Ref. 1; BAB30363." evidence="7" ref="1">
    <original>K</original>
    <variation>E</variation>
    <location>
        <position position="357"/>
    </location>
</feature>
<protein>
    <recommendedName>
        <fullName>Outer dynein arm-docking complex subunit 4</fullName>
    </recommendedName>
    <alternativeName>
        <fullName>Tetratricopeptide repeat protein 25</fullName>
        <shortName>TPR repeat protein 25</shortName>
    </alternativeName>
</protein>